<dbReference type="EC" id="2.7.7.56" evidence="1"/>
<dbReference type="EMBL" id="CP000673">
    <property type="protein sequence ID" value="EDK35455.1"/>
    <property type="molecule type" value="Genomic_DNA"/>
</dbReference>
<dbReference type="RefSeq" id="WP_012103786.1">
    <property type="nucleotide sequence ID" value="NC_009706.1"/>
</dbReference>
<dbReference type="SMR" id="A5N2V9"/>
<dbReference type="STRING" id="431943.CKL_3464"/>
<dbReference type="KEGG" id="ckl:CKL_3464"/>
<dbReference type="eggNOG" id="COG0689">
    <property type="taxonomic scope" value="Bacteria"/>
</dbReference>
<dbReference type="HOGENOM" id="CLU_050858_0_0_9"/>
<dbReference type="Proteomes" id="UP000002411">
    <property type="component" value="Chromosome"/>
</dbReference>
<dbReference type="GO" id="GO:0000175">
    <property type="term" value="F:3'-5'-RNA exonuclease activity"/>
    <property type="evidence" value="ECO:0007669"/>
    <property type="project" value="UniProtKB-UniRule"/>
</dbReference>
<dbReference type="GO" id="GO:0000049">
    <property type="term" value="F:tRNA binding"/>
    <property type="evidence" value="ECO:0007669"/>
    <property type="project" value="UniProtKB-UniRule"/>
</dbReference>
<dbReference type="GO" id="GO:0009022">
    <property type="term" value="F:tRNA nucleotidyltransferase activity"/>
    <property type="evidence" value="ECO:0007669"/>
    <property type="project" value="UniProtKB-UniRule"/>
</dbReference>
<dbReference type="GO" id="GO:0016075">
    <property type="term" value="P:rRNA catabolic process"/>
    <property type="evidence" value="ECO:0007669"/>
    <property type="project" value="UniProtKB-UniRule"/>
</dbReference>
<dbReference type="GO" id="GO:0006364">
    <property type="term" value="P:rRNA processing"/>
    <property type="evidence" value="ECO:0007669"/>
    <property type="project" value="UniProtKB-KW"/>
</dbReference>
<dbReference type="GO" id="GO:0008033">
    <property type="term" value="P:tRNA processing"/>
    <property type="evidence" value="ECO:0007669"/>
    <property type="project" value="UniProtKB-UniRule"/>
</dbReference>
<dbReference type="CDD" id="cd11362">
    <property type="entry name" value="RNase_PH_bact"/>
    <property type="match status" value="1"/>
</dbReference>
<dbReference type="FunFam" id="3.30.230.70:FF:000003">
    <property type="entry name" value="Ribonuclease PH"/>
    <property type="match status" value="1"/>
</dbReference>
<dbReference type="Gene3D" id="3.30.230.70">
    <property type="entry name" value="GHMP Kinase, N-terminal domain"/>
    <property type="match status" value="1"/>
</dbReference>
<dbReference type="HAMAP" id="MF_00564">
    <property type="entry name" value="RNase_PH"/>
    <property type="match status" value="1"/>
</dbReference>
<dbReference type="InterPro" id="IPR001247">
    <property type="entry name" value="ExoRNase_PH_dom1"/>
</dbReference>
<dbReference type="InterPro" id="IPR015847">
    <property type="entry name" value="ExoRNase_PH_dom2"/>
</dbReference>
<dbReference type="InterPro" id="IPR036345">
    <property type="entry name" value="ExoRNase_PH_dom2_sf"/>
</dbReference>
<dbReference type="InterPro" id="IPR027408">
    <property type="entry name" value="PNPase/RNase_PH_dom_sf"/>
</dbReference>
<dbReference type="InterPro" id="IPR020568">
    <property type="entry name" value="Ribosomal_Su5_D2-typ_SF"/>
</dbReference>
<dbReference type="InterPro" id="IPR050080">
    <property type="entry name" value="RNase_PH"/>
</dbReference>
<dbReference type="InterPro" id="IPR002381">
    <property type="entry name" value="RNase_PH_bac-type"/>
</dbReference>
<dbReference type="InterPro" id="IPR018336">
    <property type="entry name" value="RNase_PH_CS"/>
</dbReference>
<dbReference type="NCBIfam" id="TIGR01966">
    <property type="entry name" value="RNasePH"/>
    <property type="match status" value="1"/>
</dbReference>
<dbReference type="PANTHER" id="PTHR11953">
    <property type="entry name" value="EXOSOME COMPLEX COMPONENT"/>
    <property type="match status" value="1"/>
</dbReference>
<dbReference type="PANTHER" id="PTHR11953:SF0">
    <property type="entry name" value="EXOSOME COMPLEX COMPONENT RRP41"/>
    <property type="match status" value="1"/>
</dbReference>
<dbReference type="Pfam" id="PF01138">
    <property type="entry name" value="RNase_PH"/>
    <property type="match status" value="1"/>
</dbReference>
<dbReference type="Pfam" id="PF03725">
    <property type="entry name" value="RNase_PH_C"/>
    <property type="match status" value="1"/>
</dbReference>
<dbReference type="SUPFAM" id="SSF55666">
    <property type="entry name" value="Ribonuclease PH domain 2-like"/>
    <property type="match status" value="1"/>
</dbReference>
<dbReference type="SUPFAM" id="SSF54211">
    <property type="entry name" value="Ribosomal protein S5 domain 2-like"/>
    <property type="match status" value="1"/>
</dbReference>
<dbReference type="PROSITE" id="PS01277">
    <property type="entry name" value="RIBONUCLEASE_PH"/>
    <property type="match status" value="1"/>
</dbReference>
<protein>
    <recommendedName>
        <fullName evidence="1">Ribonuclease PH</fullName>
        <shortName evidence="1">RNase PH</shortName>
        <ecNumber evidence="1">2.7.7.56</ecNumber>
    </recommendedName>
    <alternativeName>
        <fullName evidence="1">tRNA nucleotidyltransferase</fullName>
    </alternativeName>
</protein>
<gene>
    <name evidence="1" type="primary">rph</name>
    <name type="ordered locus">CKL_3464</name>
</gene>
<comment type="function">
    <text evidence="1">Phosphorolytic 3'-5' exoribonuclease that plays an important role in tRNA 3'-end maturation. Removes nucleotide residues following the 3'-CCA terminus of tRNAs; can also add nucleotides to the ends of RNA molecules by using nucleoside diphosphates as substrates, but this may not be physiologically important. Probably plays a role in initiation of 16S rRNA degradation (leading to ribosome degradation) during starvation.</text>
</comment>
<comment type="catalytic activity">
    <reaction evidence="1">
        <text>tRNA(n+1) + phosphate = tRNA(n) + a ribonucleoside 5'-diphosphate</text>
        <dbReference type="Rhea" id="RHEA:10628"/>
        <dbReference type="Rhea" id="RHEA-COMP:17343"/>
        <dbReference type="Rhea" id="RHEA-COMP:17344"/>
        <dbReference type="ChEBI" id="CHEBI:43474"/>
        <dbReference type="ChEBI" id="CHEBI:57930"/>
        <dbReference type="ChEBI" id="CHEBI:173114"/>
        <dbReference type="EC" id="2.7.7.56"/>
    </reaction>
</comment>
<comment type="subunit">
    <text evidence="1">Homohexameric ring arranged as a trimer of dimers.</text>
</comment>
<comment type="similarity">
    <text evidence="1">Belongs to the RNase PH family.</text>
</comment>
<sequence length="248" mass="27589">MRVDGRKCNQIRPVKITRNYTKYAEGSVLIENGDTKVICTASIEDKVPPFLKGRGEGWITCEYNMIPRATQVRKARDINRGRIDGRTMEIQRIIGRALRSVVDLRAIGEKTIWVDCDVIQADGGTRTASISGAFVALVDAVNKLHKQNPFTIYPIRDFVSAVSVGIVNDTRMLDLCYLEDSRAKVDMNVVMTDSGEFVEIQGTGEQNPFTREDLKELLALAEKGIKSMISAQKDSLKMDSLWIGTGGE</sequence>
<keyword id="KW-0548">Nucleotidyltransferase</keyword>
<keyword id="KW-1185">Reference proteome</keyword>
<keyword id="KW-0694">RNA-binding</keyword>
<keyword id="KW-0698">rRNA processing</keyword>
<keyword id="KW-0808">Transferase</keyword>
<keyword id="KW-0819">tRNA processing</keyword>
<keyword id="KW-0820">tRNA-binding</keyword>
<evidence type="ECO:0000255" key="1">
    <source>
        <dbReference type="HAMAP-Rule" id="MF_00564"/>
    </source>
</evidence>
<accession>A5N2V9</accession>
<proteinExistence type="inferred from homology"/>
<reference key="1">
    <citation type="journal article" date="2008" name="Proc. Natl. Acad. Sci. U.S.A.">
        <title>The genome of Clostridium kluyveri, a strict anaerobe with unique metabolic features.</title>
        <authorList>
            <person name="Seedorf H."/>
            <person name="Fricke W.F."/>
            <person name="Veith B."/>
            <person name="Brueggemann H."/>
            <person name="Liesegang H."/>
            <person name="Strittmatter A."/>
            <person name="Miethke M."/>
            <person name="Buckel W."/>
            <person name="Hinderberger J."/>
            <person name="Li F."/>
            <person name="Hagemeier C."/>
            <person name="Thauer R.K."/>
            <person name="Gottschalk G."/>
        </authorList>
    </citation>
    <scope>NUCLEOTIDE SEQUENCE [LARGE SCALE GENOMIC DNA]</scope>
    <source>
        <strain>ATCC 8527 / DSM 555 / NBRC 12016 / NCIMB 10680 / K1</strain>
    </source>
</reference>
<feature type="chain" id="PRO_1000082286" description="Ribonuclease PH">
    <location>
        <begin position="1"/>
        <end position="248"/>
    </location>
</feature>
<feature type="binding site" evidence="1">
    <location>
        <position position="86"/>
    </location>
    <ligand>
        <name>phosphate</name>
        <dbReference type="ChEBI" id="CHEBI:43474"/>
        <note>substrate</note>
    </ligand>
</feature>
<feature type="binding site" evidence="1">
    <location>
        <begin position="124"/>
        <end position="126"/>
    </location>
    <ligand>
        <name>phosphate</name>
        <dbReference type="ChEBI" id="CHEBI:43474"/>
        <note>substrate</note>
    </ligand>
</feature>
<organism>
    <name type="scientific">Clostridium kluyveri (strain ATCC 8527 / DSM 555 / NBRC 12016 / NCIMB 10680 / K1)</name>
    <dbReference type="NCBI Taxonomy" id="431943"/>
    <lineage>
        <taxon>Bacteria</taxon>
        <taxon>Bacillati</taxon>
        <taxon>Bacillota</taxon>
        <taxon>Clostridia</taxon>
        <taxon>Eubacteriales</taxon>
        <taxon>Clostridiaceae</taxon>
        <taxon>Clostridium</taxon>
    </lineage>
</organism>
<name>RNPH_CLOK5</name>